<comment type="function">
    <text evidence="1 2 7">Dynamin-related GTPase that is essential for normal mitochondrial morphology by mediating fusion of the mitochondrial inner membranes, regulating cristae morphology and maintaining respiratory chain function (PubMed:31292547). Exists in two forms: the transmembrane, long form (Dynamin-like GTPase MGM1, long form; L-MGM1), which is tethered to the inner mitochondrial membrane, and the short soluble form (Dynamin-like GTPase MGM1, short form; S-MGM1), which results from proteolytic cleavage and localizes in the intermembrane space (By similarity). Both forms (L-MGM1 and S-MGM1) cooperate to catalyze the fusion of the mitochondrial inner membrane (By similarity). The equilibrium between L-MGM1 and S-MGM1 is essential: excess levels of S-MGM1, following loss of mitochondrial membrane potential, lead to an impaired equilibrium between L-MGM1 and S-MGM1, inhibiting mitochondrial fusion (By similarity). Plays a role in the maintenance and remodeling of mitochondrial cristae, some invaginations of the mitochondrial inner membrane that provide an increase in the surface area (PubMed:31292547). Probably acts by forming helical filaments at the inside of inner membrane tubes with the shape and dimensions of crista junctions (PubMed:31292547).</text>
</comment>
<comment type="function">
    <molecule>Dynamin-like GTPase MGM1, long form</molecule>
    <text evidence="1 2 7">Constitutes the transmembrane long form (L-MGM1) that plays a central role in mitochondrial inner membrane fusion and cristae morphology (By similarity). L-MGM1 and the soluble short form (S-MGM1) form higher-order helical assemblies that coordinate the fusion of mitochondrial inner membranes (By similarity). Inner membrane-anchored L-MGM1 molecules initiate membrane remodeling by recruiting soluble S-MGM1 to rapidly polymerize into a flexible cylindrical scaffold encaging the mitochondrial inner membrane (By similarity). Once at the membrane surface, the formation of S-MGM1 helices induce bilayer curvature (By similarity). MGM1 dimerization through the paddle region, which inserts into cardiolipin-containing membrane, promotes GTP hydrolysis and the helical assembly of a flexible MGM1 lattice on the membrane, which drives membrane curvature and mitochondrial fusion (PubMed:31292547).</text>
</comment>
<comment type="function">
    <molecule>Dynamin-like GTPase MGM1, small form</molecule>
    <text evidence="1 2 7">Constitutes the soluble short form (S-MGM1) generated by cleavage by PCP1, which plays a central role in mitochondrial inner membrane fusion and cristae morphology (By similarity). The transmembrane long form (L-MGM1) and the S-MGM1 form higher-order helical assemblies that coordinate the fusion of mitochondrial inner membranes (By similarity). Inner membrane-anchored L-MGM1 molecules initiate membrane remodeling by recruiting soluble S-MGM1 to rapidly polymerize into a flexible cylindrical scaffold encaging the mitochondrial inner membrane (By similarity). Once at the membrane surface, the formation of S-MGM1 helices induce bilayer curvature (By similarity). MGM1 dimerization through the paddle region, which inserts into cardiolipin-containing membrane, promotes GTP hydrolysis and the helical assembly of a flexible MGM1 lattice on the membrane, which drives membrane curvature and mitochondrial fusion (PubMed:31292547). Excess levels of S-MGM1 produced by cleavage by PCP1 following stress conditions that induce loss of mitochondrial membrane potential, lead to an impaired equilibrium between L-MGM1 and S-MGM1, thereby inhibiting mitochondrial fusion (By similarity).</text>
</comment>
<comment type="catalytic activity">
    <reaction evidence="7">
        <text>GTP + H2O = GDP + phosphate + H(+)</text>
        <dbReference type="Rhea" id="RHEA:19669"/>
        <dbReference type="ChEBI" id="CHEBI:15377"/>
        <dbReference type="ChEBI" id="CHEBI:15378"/>
        <dbReference type="ChEBI" id="CHEBI:37565"/>
        <dbReference type="ChEBI" id="CHEBI:43474"/>
        <dbReference type="ChEBI" id="CHEBI:58189"/>
        <dbReference type="EC" id="3.6.5.5"/>
    </reaction>
</comment>
<comment type="subunit">
    <text evidence="7">Oligomeric complex consisting of membrane-bound and soluble forms of MGM1.</text>
</comment>
<comment type="subcellular location">
    <molecule>Dynamin-like GTPase MGM1, long form</molecule>
    <subcellularLocation>
        <location evidence="2">Mitochondrion inner membrane</location>
        <topology evidence="3">Single-pass type II membrane protein</topology>
        <orientation evidence="2">Intermembrane side</orientation>
    </subcellularLocation>
</comment>
<comment type="subcellular location">
    <molecule>Dynamin-like GTPase MGM1, small form</molecule>
    <subcellularLocation>
        <location evidence="2">Mitochondrion intermembrane space</location>
    </subcellularLocation>
</comment>
<comment type="domain">
    <text evidence="7">The paddle region plays a major role in driving mitochondrial inner membrane fusion (PubMed:31292547). It binds lipid membranes enriched in negatively charged phospholipids, such as cardiolipin, and promotes membrane tubulation (PubMed:31292547). MGM1 dimerization through the paddle domain promotes the helical assembly of a flexible MGM1 lattice on the membrane, driving mitochondrial fusion in cells (PubMed:31292547).</text>
</comment>
<comment type="PTM">
    <text evidence="2">Cleavage of the transit peptide by mitochondrial processing protease (MPP) produces a long integral membrane form of MGM1 (L-MGM1) (By similarity). Further processing by the rhomboid protease PCP1 produces a short peripheral membrane form of MGM1 (S-MGM1) (By similarity). Both forms are required for full activity (By similarity).</text>
</comment>
<comment type="similarity">
    <text evidence="5">Belongs to the TRAFAC class dynamin-like GTPase superfamily. Dynamin/Fzo/YdjA family.</text>
</comment>
<dbReference type="EC" id="3.6.5.5" evidence="7"/>
<dbReference type="EMBL" id="GL988047">
    <property type="protein sequence ID" value="EGS17266.1"/>
    <property type="molecule type" value="Genomic_DNA"/>
</dbReference>
<dbReference type="RefSeq" id="XP_006696884.1">
    <property type="nucleotide sequence ID" value="XM_006696821.1"/>
</dbReference>
<dbReference type="PDB" id="6QL4">
    <property type="method" value="X-ray"/>
    <property type="resolution" value="3.60 A"/>
    <property type="chains" value="A/B=1-939"/>
</dbReference>
<dbReference type="PDB" id="6RZT">
    <property type="method" value="EM"/>
    <property type="resolution" value="14.70 A"/>
    <property type="chains" value="A/B/C/D/E/F/G/H/I/J/K/L=219-913"/>
</dbReference>
<dbReference type="PDB" id="6RZU">
    <property type="method" value="EM"/>
    <property type="resolution" value="14.70 A"/>
    <property type="chains" value="A/B/C/D/E/F/G/H/I/J/K/L=219-913"/>
</dbReference>
<dbReference type="PDB" id="6RZV">
    <property type="method" value="EM"/>
    <property type="resolution" value="20.60 A"/>
    <property type="chains" value="A/B/C/D/E/F/G/H/I/J/K/L/M/N/O/P=219-913"/>
</dbReference>
<dbReference type="PDB" id="6RZW">
    <property type="method" value="EM"/>
    <property type="resolution" value="18.80 A"/>
    <property type="chains" value="A/B/C/D/E/F/G/H/I/J=219-913"/>
</dbReference>
<dbReference type="PDBsum" id="6QL4"/>
<dbReference type="PDBsum" id="6RZT"/>
<dbReference type="PDBsum" id="6RZU"/>
<dbReference type="PDBsum" id="6RZV"/>
<dbReference type="PDBsum" id="6RZW"/>
<dbReference type="EMDB" id="EMD-10062"/>
<dbReference type="EMDB" id="EMD-10063"/>
<dbReference type="EMDB" id="EMD-10064"/>
<dbReference type="EMDB" id="EMD-10065"/>
<dbReference type="SMR" id="G0SGC7"/>
<dbReference type="STRING" id="759272.G0SGC7"/>
<dbReference type="GeneID" id="18260623"/>
<dbReference type="KEGG" id="cthr:CTHT_0065850"/>
<dbReference type="eggNOG" id="KOG0446">
    <property type="taxonomic scope" value="Eukaryota"/>
</dbReference>
<dbReference type="HOGENOM" id="CLU_008640_0_0_1"/>
<dbReference type="OMA" id="PLKMGYV"/>
<dbReference type="OrthoDB" id="5061070at2759"/>
<dbReference type="Proteomes" id="UP000008066">
    <property type="component" value="Unassembled WGS sequence"/>
</dbReference>
<dbReference type="GO" id="GO:0005874">
    <property type="term" value="C:microtubule"/>
    <property type="evidence" value="ECO:0007669"/>
    <property type="project" value="TreeGrafter"/>
</dbReference>
<dbReference type="GO" id="GO:0005743">
    <property type="term" value="C:mitochondrial inner membrane"/>
    <property type="evidence" value="ECO:0007669"/>
    <property type="project" value="UniProtKB-SubCell"/>
</dbReference>
<dbReference type="GO" id="GO:0005758">
    <property type="term" value="C:mitochondrial intermembrane space"/>
    <property type="evidence" value="ECO:0007669"/>
    <property type="project" value="UniProtKB-SubCell"/>
</dbReference>
<dbReference type="GO" id="GO:0005886">
    <property type="term" value="C:plasma membrane"/>
    <property type="evidence" value="ECO:0007669"/>
    <property type="project" value="TreeGrafter"/>
</dbReference>
<dbReference type="GO" id="GO:0005525">
    <property type="term" value="F:GTP binding"/>
    <property type="evidence" value="ECO:0007669"/>
    <property type="project" value="UniProtKB-KW"/>
</dbReference>
<dbReference type="GO" id="GO:0003924">
    <property type="term" value="F:GTPase activity"/>
    <property type="evidence" value="ECO:0000314"/>
    <property type="project" value="UniProtKB"/>
</dbReference>
<dbReference type="GO" id="GO:0140523">
    <property type="term" value="F:GTPase-dependent fusogenic activity"/>
    <property type="evidence" value="ECO:0000314"/>
    <property type="project" value="UniProtKB"/>
</dbReference>
<dbReference type="GO" id="GO:0008289">
    <property type="term" value="F:lipid binding"/>
    <property type="evidence" value="ECO:0007669"/>
    <property type="project" value="UniProtKB-KW"/>
</dbReference>
<dbReference type="GO" id="GO:0180020">
    <property type="term" value="F:membrane bending activity"/>
    <property type="evidence" value="ECO:0000314"/>
    <property type="project" value="UniProtKB"/>
</dbReference>
<dbReference type="GO" id="GO:0046872">
    <property type="term" value="F:metal ion binding"/>
    <property type="evidence" value="ECO:0007669"/>
    <property type="project" value="UniProtKB-KW"/>
</dbReference>
<dbReference type="GO" id="GO:0008017">
    <property type="term" value="F:microtubule binding"/>
    <property type="evidence" value="ECO:0007669"/>
    <property type="project" value="TreeGrafter"/>
</dbReference>
<dbReference type="GO" id="GO:0031623">
    <property type="term" value="P:receptor internalization"/>
    <property type="evidence" value="ECO:0007669"/>
    <property type="project" value="TreeGrafter"/>
</dbReference>
<dbReference type="CDD" id="cd08771">
    <property type="entry name" value="DLP_1"/>
    <property type="match status" value="1"/>
</dbReference>
<dbReference type="FunFam" id="3.40.50.300:FF:000741">
    <property type="entry name" value="Putative mitochondrial dynamin GTPase"/>
    <property type="match status" value="1"/>
</dbReference>
<dbReference type="Gene3D" id="3.40.50.300">
    <property type="entry name" value="P-loop containing nucleotide triphosphate hydrolases"/>
    <property type="match status" value="1"/>
</dbReference>
<dbReference type="InterPro" id="IPR022812">
    <property type="entry name" value="Dynamin"/>
</dbReference>
<dbReference type="InterPro" id="IPR001401">
    <property type="entry name" value="Dynamin_GTPase"/>
</dbReference>
<dbReference type="InterPro" id="IPR019762">
    <property type="entry name" value="Dynamin_GTPase_CS"/>
</dbReference>
<dbReference type="InterPro" id="IPR045063">
    <property type="entry name" value="Dynamin_N"/>
</dbReference>
<dbReference type="InterPro" id="IPR000375">
    <property type="entry name" value="Dynamin_stalk"/>
</dbReference>
<dbReference type="InterPro" id="IPR030381">
    <property type="entry name" value="G_DYNAMIN_dom"/>
</dbReference>
<dbReference type="InterPro" id="IPR020850">
    <property type="entry name" value="GED_dom"/>
</dbReference>
<dbReference type="InterPro" id="IPR056495">
    <property type="entry name" value="LIS_MGM1"/>
</dbReference>
<dbReference type="InterPro" id="IPR027417">
    <property type="entry name" value="P-loop_NTPase"/>
</dbReference>
<dbReference type="PANTHER" id="PTHR11566">
    <property type="entry name" value="DYNAMIN"/>
    <property type="match status" value="1"/>
</dbReference>
<dbReference type="PANTHER" id="PTHR11566:SF212">
    <property type="entry name" value="DYNAMIN"/>
    <property type="match status" value="1"/>
</dbReference>
<dbReference type="Pfam" id="PF01031">
    <property type="entry name" value="Dynamin_M"/>
    <property type="match status" value="1"/>
</dbReference>
<dbReference type="Pfam" id="PF00350">
    <property type="entry name" value="Dynamin_N"/>
    <property type="match status" value="1"/>
</dbReference>
<dbReference type="Pfam" id="PF24550">
    <property type="entry name" value="LIS_MGM1"/>
    <property type="match status" value="1"/>
</dbReference>
<dbReference type="PRINTS" id="PR00195">
    <property type="entry name" value="DYNAMIN"/>
</dbReference>
<dbReference type="SMART" id="SM00053">
    <property type="entry name" value="DYNc"/>
    <property type="match status" value="1"/>
</dbReference>
<dbReference type="SUPFAM" id="SSF52540">
    <property type="entry name" value="P-loop containing nucleoside triphosphate hydrolases"/>
    <property type="match status" value="1"/>
</dbReference>
<dbReference type="PROSITE" id="PS00410">
    <property type="entry name" value="G_DYNAMIN_1"/>
    <property type="match status" value="1"/>
</dbReference>
<dbReference type="PROSITE" id="PS51718">
    <property type="entry name" value="G_DYNAMIN_2"/>
    <property type="match status" value="1"/>
</dbReference>
<dbReference type="PROSITE" id="PS51388">
    <property type="entry name" value="GED"/>
    <property type="match status" value="1"/>
</dbReference>
<feature type="transit peptide" description="Mitochondrion" evidence="3">
    <location>
        <begin position="1"/>
        <end position="27"/>
    </location>
</feature>
<feature type="chain" id="PRO_0000460452" description="Dynamin-like GTPase MGM1, long form" evidence="9">
    <location>
        <begin position="28"/>
        <end position="939"/>
    </location>
</feature>
<feature type="chain" id="PRO_0000460453" description="Dynamin-like GTPase MGM1, small form" evidence="2">
    <location>
        <begin position="190"/>
        <end position="939"/>
    </location>
</feature>
<feature type="transmembrane region" description="Helical" evidence="3">
    <location>
        <begin position="85"/>
        <end position="103"/>
    </location>
</feature>
<feature type="domain" description="Dynamin-type G" evidence="5">
    <location>
        <begin position="249"/>
        <end position="522"/>
    </location>
</feature>
<feature type="domain" description="GED" evidence="4">
    <location>
        <begin position="815"/>
        <end position="909"/>
    </location>
</feature>
<feature type="region of interest" description="Disordered" evidence="6">
    <location>
        <begin position="170"/>
        <end position="196"/>
    </location>
</feature>
<feature type="region of interest" description="G1 motif" evidence="5">
    <location>
        <begin position="259"/>
        <end position="266"/>
    </location>
</feature>
<feature type="region of interest" description="G2 motif" evidence="5">
    <location>
        <begin position="285"/>
        <end position="287"/>
    </location>
</feature>
<feature type="region of interest" description="G3 motif" evidence="5">
    <location>
        <begin position="359"/>
        <end position="362"/>
    </location>
</feature>
<feature type="region of interest" description="G4 motif" evidence="5">
    <location>
        <begin position="427"/>
        <end position="430"/>
    </location>
</feature>
<feature type="region of interest" description="G5 motif" evidence="5">
    <location>
        <begin position="456"/>
        <end position="459"/>
    </location>
</feature>
<feature type="region of interest" description="Stalk region" evidence="10">
    <location>
        <begin position="549"/>
        <end position="703"/>
    </location>
</feature>
<feature type="region of interest" description="Paddle region" evidence="10">
    <location>
        <begin position="710"/>
        <end position="809"/>
    </location>
</feature>
<feature type="region of interest" description="Stalk region" evidence="10">
    <location>
        <begin position="810"/>
        <end position="877"/>
    </location>
</feature>
<feature type="compositionally biased region" description="Gly residues" evidence="6">
    <location>
        <begin position="170"/>
        <end position="183"/>
    </location>
</feature>
<feature type="binding site" evidence="1">
    <location>
        <position position="262"/>
    </location>
    <ligand>
        <name>GTP</name>
        <dbReference type="ChEBI" id="CHEBI:37565"/>
    </ligand>
</feature>
<feature type="binding site" evidence="1">
    <location>
        <position position="264"/>
    </location>
    <ligand>
        <name>GTP</name>
        <dbReference type="ChEBI" id="CHEBI:37565"/>
    </ligand>
</feature>
<feature type="binding site" evidence="1">
    <location>
        <position position="265"/>
    </location>
    <ligand>
        <name>GTP</name>
        <dbReference type="ChEBI" id="CHEBI:37565"/>
    </ligand>
</feature>
<feature type="binding site" evidence="1">
    <location>
        <position position="266"/>
    </location>
    <ligand>
        <name>GTP</name>
        <dbReference type="ChEBI" id="CHEBI:37565"/>
    </ligand>
</feature>
<feature type="binding site" evidence="1">
    <location>
        <position position="266"/>
    </location>
    <ligand>
        <name>Mg(2+)</name>
        <dbReference type="ChEBI" id="CHEBI:18420"/>
    </ligand>
</feature>
<feature type="binding site" evidence="1">
    <location>
        <position position="267"/>
    </location>
    <ligand>
        <name>GTP</name>
        <dbReference type="ChEBI" id="CHEBI:37565"/>
    </ligand>
</feature>
<feature type="binding site" evidence="1">
    <location>
        <position position="281"/>
    </location>
    <ligand>
        <name>GTP</name>
        <dbReference type="ChEBI" id="CHEBI:37565"/>
    </ligand>
</feature>
<feature type="binding site" evidence="1">
    <location>
        <position position="286"/>
    </location>
    <ligand>
        <name>Mg(2+)</name>
        <dbReference type="ChEBI" id="CHEBI:18420"/>
    </ligand>
</feature>
<feature type="binding site" evidence="1">
    <location>
        <position position="359"/>
    </location>
    <ligand>
        <name>Mg(2+)</name>
        <dbReference type="ChEBI" id="CHEBI:18420"/>
    </ligand>
</feature>
<feature type="binding site" evidence="1">
    <location>
        <position position="428"/>
    </location>
    <ligand>
        <name>GTP</name>
        <dbReference type="ChEBI" id="CHEBI:37565"/>
    </ligand>
</feature>
<feature type="binding site" evidence="1">
    <location>
        <position position="430"/>
    </location>
    <ligand>
        <name>GTP</name>
        <dbReference type="ChEBI" id="CHEBI:37565"/>
    </ligand>
</feature>
<feature type="binding site" evidence="1">
    <location>
        <position position="457"/>
    </location>
    <ligand>
        <name>GTP</name>
        <dbReference type="ChEBI" id="CHEBI:37565"/>
    </ligand>
</feature>
<feature type="disulfide bond" evidence="12 13 14 15 16">
    <location>
        <begin position="812"/>
        <end position="821"/>
    </location>
</feature>
<feature type="mutagenesis site" description="Impaired mitochondrial morphology." evidence="7">
    <original>D</original>
    <variation>A</variation>
    <location>
        <position position="559"/>
    </location>
</feature>
<feature type="mutagenesis site" description="Impaired mitochondrial morphology." evidence="7">
    <original>K</original>
    <variation>A</variation>
    <location>
        <position position="562"/>
    </location>
</feature>
<feature type="mutagenesis site" description="Abolished GTPase activity." evidence="7">
    <original>F</original>
    <variation>D</variation>
    <location>
        <position position="840"/>
    </location>
</feature>
<accession>G0SGC7</accession>
<proteinExistence type="evidence at protein level"/>
<sequence length="939" mass="103185">MSAQLRAAAAITPAARRVISGPAAVRRFHHYHHLPTGGIQRVEIAARGLRRSVQFPALANAYHNNAVIVRNASFTRLLPKLALKFIRVPALFGGMMLGAVGWVQYQAIKVSNSAQEFYGNIKATVADTAFSVWSSAVDIAEQTKRGWENTKNQFEIPEWLDRIMKGEGLAGEGSGSGEGGPNGGPEPPRQSRAGAATVAGASATVYGYGASDNDDRTPEEIMRDDNMMFITKKMIEIRNLLQKVGQGSTVTLPSIVVIGSQSSGKSSVLEAIVGHEFLPKGSNMITRRPIELTLVNDPEAKVDYGEFPDLGLARVTDFSLIQKTLTELNQSVPESECVTDDPIRLTIHSPNIPDLSLIDLPGYIQVAGENQPRELKRKITELCDKYIRGPNIILAISAADTDLANSTALQASRRVDPRGERTIGVITKMDLVEPEKGAAILSDRQYPLKLGYVGVISKLPPQSGLFRRDTGNLLASINRNEKNYFGSHPTEFGPDSGVSTGVMTLRKKLLQVLEQQMSSKLNETTEAIQRELEETTYQFKVQYNEQPMSAESYLAASLDDFKHQFHEFASSFGRPQLQTLLKDALDQKVLDQLAARYWNRPIEDLSPAPREPDNIIDLPKADPDSPYWHRQLDTACSGLTRLGVGRLAATVAASAIQQHVEKLLDKSSFAKHPSARKVISDAAATVLADRSYATSDGIEISLKPYKFDPDIQPNEWAQGREHVVGVLQAELEQCQAAMKALENSVGGRKKLKEVMSFVDKARKGEIIVEGDHPSGAGGFSAALLARGREAVFLRDRADILSLRIQAAKSRQCKTLTNKYYCPEVFLDAVATKLAQTAVLFLNVEMLNDFYVRFPREVEAKLHEHMHAGGGLEKFAREDPKVRRHLDLIRRKELLETVLGKIEELHRISSGTAGTLGLRGAGDLKKRIGAPSSSGRRSFF</sequence>
<name>MGM1_CHATD</name>
<reference key="1">
    <citation type="journal article" date="2011" name="Cell">
        <title>Insight into structure and assembly of the nuclear pore complex by utilizing the genome of a eukaryotic thermophile.</title>
        <authorList>
            <person name="Amlacher S."/>
            <person name="Sarges P."/>
            <person name="Flemming D."/>
            <person name="van Noort V."/>
            <person name="Kunze R."/>
            <person name="Devos D.P."/>
            <person name="Arumugam M."/>
            <person name="Bork P."/>
            <person name="Hurt E."/>
        </authorList>
    </citation>
    <scope>NUCLEOTIDE SEQUENCE [LARGE SCALE GENOMIC DNA]</scope>
    <source>
        <strain>DSM 1495 / CBS 144.50 / IMI 039719</strain>
    </source>
</reference>
<reference evidence="12 13 14 15 16" key="2">
    <citation type="journal article" date="2019" name="Nature">
        <title>Structure and assembly of the mitochondrial membrane remodelling GTPase Mgm1.</title>
        <authorList>
            <person name="Faelber K."/>
            <person name="Dietrich L."/>
            <person name="Noel J.K."/>
            <person name="Wollweber F."/>
            <person name="Pfitzner A.K."/>
            <person name="Muehleip A."/>
            <person name="Sanchez R."/>
            <person name="Kudryashev M."/>
            <person name="Chiaruttini N."/>
            <person name="Lilie H."/>
            <person name="Schlegel J."/>
            <person name="Rosenbaum E."/>
            <person name="Hessenberger M."/>
            <person name="Matthaeus C."/>
            <person name="Kunz S."/>
            <person name="von der Malsburg A."/>
            <person name="Noe F."/>
            <person name="Roux A."/>
            <person name="van der Laan M."/>
            <person name="Kuehlbrandt W."/>
            <person name="Daumke O."/>
        </authorList>
    </citation>
    <scope>X-RAY CRYSTALLOGRAPHY (3.60 ANGSTROMS)</scope>
    <scope>FUNCTION</scope>
    <scope>SUBUNIT</scope>
    <scope>DISULFIDE BONDS</scope>
    <scope>MUTAGENESIS OF ASP-559; LYS-562 AND PHE-840</scope>
</reference>
<gene>
    <name evidence="8" type="primary">MGM1</name>
    <name evidence="11" type="ORF">CTHT_0065850</name>
</gene>
<keyword id="KW-0002">3D-structure</keyword>
<keyword id="KW-1015">Disulfide bond</keyword>
<keyword id="KW-0342">GTP-binding</keyword>
<keyword id="KW-0378">Hydrolase</keyword>
<keyword id="KW-0446">Lipid-binding</keyword>
<keyword id="KW-0460">Magnesium</keyword>
<keyword id="KW-0472">Membrane</keyword>
<keyword id="KW-0479">Metal-binding</keyword>
<keyword id="KW-0496">Mitochondrion</keyword>
<keyword id="KW-0999">Mitochondrion inner membrane</keyword>
<keyword id="KW-0547">Nucleotide-binding</keyword>
<keyword id="KW-1185">Reference proteome</keyword>
<keyword id="KW-0809">Transit peptide</keyword>
<keyword id="KW-0812">Transmembrane</keyword>
<keyword id="KW-1133">Transmembrane helix</keyword>
<evidence type="ECO:0000250" key="1">
    <source>
        <dbReference type="UniProtKB" id="O60313"/>
    </source>
</evidence>
<evidence type="ECO:0000250" key="2">
    <source>
        <dbReference type="UniProtKB" id="P32266"/>
    </source>
</evidence>
<evidence type="ECO:0000255" key="3"/>
<evidence type="ECO:0000255" key="4">
    <source>
        <dbReference type="PROSITE-ProRule" id="PRU00720"/>
    </source>
</evidence>
<evidence type="ECO:0000255" key="5">
    <source>
        <dbReference type="PROSITE-ProRule" id="PRU01055"/>
    </source>
</evidence>
<evidence type="ECO:0000256" key="6">
    <source>
        <dbReference type="SAM" id="MobiDB-lite"/>
    </source>
</evidence>
<evidence type="ECO:0000269" key="7">
    <source>
    </source>
</evidence>
<evidence type="ECO:0000303" key="8">
    <source>
    </source>
</evidence>
<evidence type="ECO:0000305" key="9"/>
<evidence type="ECO:0000305" key="10">
    <source>
    </source>
</evidence>
<evidence type="ECO:0000312" key="11">
    <source>
        <dbReference type="EMBL" id="EGS17266.1"/>
    </source>
</evidence>
<evidence type="ECO:0007744" key="12">
    <source>
        <dbReference type="PDB" id="6QL4"/>
    </source>
</evidence>
<evidence type="ECO:0007744" key="13">
    <source>
        <dbReference type="PDB" id="6RZT"/>
    </source>
</evidence>
<evidence type="ECO:0007744" key="14">
    <source>
        <dbReference type="PDB" id="6RZU"/>
    </source>
</evidence>
<evidence type="ECO:0007744" key="15">
    <source>
        <dbReference type="PDB" id="6RZV"/>
    </source>
</evidence>
<evidence type="ECO:0007744" key="16">
    <source>
        <dbReference type="PDB" id="6RZW"/>
    </source>
</evidence>
<organism>
    <name type="scientific">Chaetomium thermophilum (strain DSM 1495 / CBS 144.50 / IMI 039719)</name>
    <name type="common">Thermochaetoides thermophila</name>
    <dbReference type="NCBI Taxonomy" id="759272"/>
    <lineage>
        <taxon>Eukaryota</taxon>
        <taxon>Fungi</taxon>
        <taxon>Dikarya</taxon>
        <taxon>Ascomycota</taxon>
        <taxon>Pezizomycotina</taxon>
        <taxon>Sordariomycetes</taxon>
        <taxon>Sordariomycetidae</taxon>
        <taxon>Sordariales</taxon>
        <taxon>Chaetomiaceae</taxon>
        <taxon>Thermochaetoides</taxon>
    </lineage>
</organism>
<protein>
    <recommendedName>
        <fullName evidence="9">Dynamin-like GTPase MGM1, mitochondrial</fullName>
        <ecNumber evidence="7">3.6.5.5</ecNumber>
    </recommendedName>
    <component>
        <recommendedName>
            <fullName evidence="9">Dynamin-like GTPase MGM1, long form</fullName>
            <shortName>l-MGM1</shortName>
        </recommendedName>
    </component>
    <component>
        <recommendedName>
            <fullName evidence="9">Dynamin-like GTPase MGM1, small form</fullName>
            <shortName>s-MGM1</shortName>
        </recommendedName>
    </component>
</protein>